<organism>
    <name type="scientific">Salmonella paratyphi A (strain AKU_12601)</name>
    <dbReference type="NCBI Taxonomy" id="554290"/>
    <lineage>
        <taxon>Bacteria</taxon>
        <taxon>Pseudomonadati</taxon>
        <taxon>Pseudomonadota</taxon>
        <taxon>Gammaproteobacteria</taxon>
        <taxon>Enterobacterales</taxon>
        <taxon>Enterobacteriaceae</taxon>
        <taxon>Salmonella</taxon>
    </lineage>
</organism>
<keyword id="KW-0067">ATP-binding</keyword>
<keyword id="KW-0963">Cytoplasm</keyword>
<keyword id="KW-1015">Disulfide bond</keyword>
<keyword id="KW-0547">Nucleotide-binding</keyword>
<keyword id="KW-0676">Redox-active center</keyword>
<keyword id="KW-0694">RNA-binding</keyword>
<keyword id="KW-0784">Thiamine biosynthesis</keyword>
<keyword id="KW-0808">Transferase</keyword>
<keyword id="KW-0820">tRNA-binding</keyword>
<comment type="function">
    <text evidence="1">Catalyzes the ATP-dependent transfer of a sulfur to tRNA to produce 4-thiouridine in position 8 of tRNAs, which functions as a near-UV photosensor. Also catalyzes the transfer of sulfur to the sulfur carrier protein ThiS, forming ThiS-thiocarboxylate. This is a step in the synthesis of thiazole, in the thiamine biosynthesis pathway. The sulfur is donated as persulfide by IscS.</text>
</comment>
<comment type="catalytic activity">
    <reaction evidence="1">
        <text>[ThiI sulfur-carrier protein]-S-sulfanyl-L-cysteine + a uridine in tRNA + 2 reduced [2Fe-2S]-[ferredoxin] + ATP + H(+) = [ThiI sulfur-carrier protein]-L-cysteine + a 4-thiouridine in tRNA + 2 oxidized [2Fe-2S]-[ferredoxin] + AMP + diphosphate</text>
        <dbReference type="Rhea" id="RHEA:24176"/>
        <dbReference type="Rhea" id="RHEA-COMP:10000"/>
        <dbReference type="Rhea" id="RHEA-COMP:10001"/>
        <dbReference type="Rhea" id="RHEA-COMP:13337"/>
        <dbReference type="Rhea" id="RHEA-COMP:13338"/>
        <dbReference type="Rhea" id="RHEA-COMP:13339"/>
        <dbReference type="Rhea" id="RHEA-COMP:13340"/>
        <dbReference type="ChEBI" id="CHEBI:15378"/>
        <dbReference type="ChEBI" id="CHEBI:29950"/>
        <dbReference type="ChEBI" id="CHEBI:30616"/>
        <dbReference type="ChEBI" id="CHEBI:33019"/>
        <dbReference type="ChEBI" id="CHEBI:33737"/>
        <dbReference type="ChEBI" id="CHEBI:33738"/>
        <dbReference type="ChEBI" id="CHEBI:61963"/>
        <dbReference type="ChEBI" id="CHEBI:65315"/>
        <dbReference type="ChEBI" id="CHEBI:136798"/>
        <dbReference type="ChEBI" id="CHEBI:456215"/>
        <dbReference type="EC" id="2.8.1.4"/>
    </reaction>
</comment>
<comment type="catalytic activity">
    <reaction evidence="1">
        <text>[ThiS sulfur-carrier protein]-C-terminal Gly-Gly-AMP + S-sulfanyl-L-cysteinyl-[cysteine desulfurase] + AH2 = [ThiS sulfur-carrier protein]-C-terminal-Gly-aminoethanethioate + L-cysteinyl-[cysteine desulfurase] + A + AMP + 2 H(+)</text>
        <dbReference type="Rhea" id="RHEA:43340"/>
        <dbReference type="Rhea" id="RHEA-COMP:12157"/>
        <dbReference type="Rhea" id="RHEA-COMP:12158"/>
        <dbReference type="Rhea" id="RHEA-COMP:12910"/>
        <dbReference type="Rhea" id="RHEA-COMP:19908"/>
        <dbReference type="ChEBI" id="CHEBI:13193"/>
        <dbReference type="ChEBI" id="CHEBI:15378"/>
        <dbReference type="ChEBI" id="CHEBI:17499"/>
        <dbReference type="ChEBI" id="CHEBI:29950"/>
        <dbReference type="ChEBI" id="CHEBI:61963"/>
        <dbReference type="ChEBI" id="CHEBI:90618"/>
        <dbReference type="ChEBI" id="CHEBI:232372"/>
        <dbReference type="ChEBI" id="CHEBI:456215"/>
    </reaction>
</comment>
<comment type="pathway">
    <text evidence="1">Cofactor biosynthesis; thiamine diphosphate biosynthesis.</text>
</comment>
<comment type="subcellular location">
    <subcellularLocation>
        <location evidence="1">Cytoplasm</location>
    </subcellularLocation>
</comment>
<comment type="similarity">
    <text evidence="1">Belongs to the ThiI family.</text>
</comment>
<dbReference type="EC" id="2.8.1.4" evidence="1"/>
<dbReference type="EMBL" id="FM200053">
    <property type="protein sequence ID" value="CAR60350.1"/>
    <property type="molecule type" value="Genomic_DNA"/>
</dbReference>
<dbReference type="RefSeq" id="WP_000668648.1">
    <property type="nucleotide sequence ID" value="NC_011147.1"/>
</dbReference>
<dbReference type="SMR" id="B5BDA7"/>
<dbReference type="KEGG" id="sek:SSPA2140"/>
<dbReference type="HOGENOM" id="CLU_037952_4_1_6"/>
<dbReference type="UniPathway" id="UPA00060"/>
<dbReference type="Proteomes" id="UP000001869">
    <property type="component" value="Chromosome"/>
</dbReference>
<dbReference type="GO" id="GO:0005829">
    <property type="term" value="C:cytosol"/>
    <property type="evidence" value="ECO:0007669"/>
    <property type="project" value="TreeGrafter"/>
</dbReference>
<dbReference type="GO" id="GO:0005524">
    <property type="term" value="F:ATP binding"/>
    <property type="evidence" value="ECO:0007669"/>
    <property type="project" value="UniProtKB-UniRule"/>
</dbReference>
<dbReference type="GO" id="GO:0004810">
    <property type="term" value="F:CCA tRNA nucleotidyltransferase activity"/>
    <property type="evidence" value="ECO:0007669"/>
    <property type="project" value="InterPro"/>
</dbReference>
<dbReference type="GO" id="GO:0000049">
    <property type="term" value="F:tRNA binding"/>
    <property type="evidence" value="ECO:0007669"/>
    <property type="project" value="UniProtKB-UniRule"/>
</dbReference>
<dbReference type="GO" id="GO:0140741">
    <property type="term" value="F:tRNA-uracil-4 sulfurtransferase activity"/>
    <property type="evidence" value="ECO:0007669"/>
    <property type="project" value="UniProtKB-EC"/>
</dbReference>
<dbReference type="GO" id="GO:0009228">
    <property type="term" value="P:thiamine biosynthetic process"/>
    <property type="evidence" value="ECO:0007669"/>
    <property type="project" value="UniProtKB-KW"/>
</dbReference>
<dbReference type="GO" id="GO:0009229">
    <property type="term" value="P:thiamine diphosphate biosynthetic process"/>
    <property type="evidence" value="ECO:0007669"/>
    <property type="project" value="UniProtKB-UniRule"/>
</dbReference>
<dbReference type="GO" id="GO:0052837">
    <property type="term" value="P:thiazole biosynthetic process"/>
    <property type="evidence" value="ECO:0007669"/>
    <property type="project" value="InterPro"/>
</dbReference>
<dbReference type="GO" id="GO:0002937">
    <property type="term" value="P:tRNA 4-thiouridine biosynthesis"/>
    <property type="evidence" value="ECO:0007669"/>
    <property type="project" value="TreeGrafter"/>
</dbReference>
<dbReference type="CDD" id="cd01712">
    <property type="entry name" value="PPase_ThiI"/>
    <property type="match status" value="1"/>
</dbReference>
<dbReference type="CDD" id="cd00158">
    <property type="entry name" value="RHOD"/>
    <property type="match status" value="1"/>
</dbReference>
<dbReference type="CDD" id="cd11716">
    <property type="entry name" value="THUMP_ThiI"/>
    <property type="match status" value="1"/>
</dbReference>
<dbReference type="FunFam" id="3.30.2130.30:FF:000002">
    <property type="entry name" value="tRNA sulfurtransferase"/>
    <property type="match status" value="1"/>
</dbReference>
<dbReference type="FunFam" id="3.40.250.10:FF:000003">
    <property type="entry name" value="tRNA sulfurtransferase"/>
    <property type="match status" value="1"/>
</dbReference>
<dbReference type="FunFam" id="3.40.50.620:FF:000029">
    <property type="entry name" value="tRNA sulfurtransferase"/>
    <property type="match status" value="1"/>
</dbReference>
<dbReference type="Gene3D" id="3.30.2130.30">
    <property type="match status" value="1"/>
</dbReference>
<dbReference type="Gene3D" id="3.40.50.620">
    <property type="entry name" value="HUPs"/>
    <property type="match status" value="1"/>
</dbReference>
<dbReference type="Gene3D" id="3.40.250.10">
    <property type="entry name" value="Rhodanese-like domain"/>
    <property type="match status" value="1"/>
</dbReference>
<dbReference type="HAMAP" id="MF_00021">
    <property type="entry name" value="ThiI"/>
    <property type="match status" value="1"/>
</dbReference>
<dbReference type="InterPro" id="IPR001763">
    <property type="entry name" value="Rhodanese-like_dom"/>
</dbReference>
<dbReference type="InterPro" id="IPR036873">
    <property type="entry name" value="Rhodanese-like_dom_sf"/>
</dbReference>
<dbReference type="InterPro" id="IPR014729">
    <property type="entry name" value="Rossmann-like_a/b/a_fold"/>
</dbReference>
<dbReference type="InterPro" id="IPR020536">
    <property type="entry name" value="ThiI_AANH"/>
</dbReference>
<dbReference type="InterPro" id="IPR054173">
    <property type="entry name" value="ThiI_fer"/>
</dbReference>
<dbReference type="InterPro" id="IPR049961">
    <property type="entry name" value="ThiI_N"/>
</dbReference>
<dbReference type="InterPro" id="IPR026340">
    <property type="entry name" value="THII_Thiazole_biosynth_dom"/>
</dbReference>
<dbReference type="InterPro" id="IPR004114">
    <property type="entry name" value="THUMP_dom"/>
</dbReference>
<dbReference type="InterPro" id="IPR049962">
    <property type="entry name" value="THUMP_ThiI"/>
</dbReference>
<dbReference type="InterPro" id="IPR003720">
    <property type="entry name" value="tRNA_STrfase"/>
</dbReference>
<dbReference type="InterPro" id="IPR050102">
    <property type="entry name" value="tRNA_sulfurtransferase_ThiI"/>
</dbReference>
<dbReference type="NCBIfam" id="TIGR04271">
    <property type="entry name" value="ThiI_C_thiazole"/>
    <property type="match status" value="1"/>
</dbReference>
<dbReference type="NCBIfam" id="TIGR00342">
    <property type="entry name" value="tRNA uracil 4-sulfurtransferase ThiI"/>
    <property type="match status" value="1"/>
</dbReference>
<dbReference type="PANTHER" id="PTHR43209">
    <property type="entry name" value="TRNA SULFURTRANSFERASE"/>
    <property type="match status" value="1"/>
</dbReference>
<dbReference type="PANTHER" id="PTHR43209:SF1">
    <property type="entry name" value="TRNA SULFURTRANSFERASE"/>
    <property type="match status" value="1"/>
</dbReference>
<dbReference type="Pfam" id="PF02568">
    <property type="entry name" value="ThiI"/>
    <property type="match status" value="1"/>
</dbReference>
<dbReference type="Pfam" id="PF22025">
    <property type="entry name" value="ThiI_fer"/>
    <property type="match status" value="1"/>
</dbReference>
<dbReference type="Pfam" id="PF02926">
    <property type="entry name" value="THUMP"/>
    <property type="match status" value="1"/>
</dbReference>
<dbReference type="SMART" id="SM00981">
    <property type="entry name" value="THUMP"/>
    <property type="match status" value="1"/>
</dbReference>
<dbReference type="SUPFAM" id="SSF52402">
    <property type="entry name" value="Adenine nucleotide alpha hydrolases-like"/>
    <property type="match status" value="1"/>
</dbReference>
<dbReference type="SUPFAM" id="SSF52821">
    <property type="entry name" value="Rhodanese/Cell cycle control phosphatase"/>
    <property type="match status" value="1"/>
</dbReference>
<dbReference type="SUPFAM" id="SSF143437">
    <property type="entry name" value="THUMP domain-like"/>
    <property type="match status" value="1"/>
</dbReference>
<dbReference type="PROSITE" id="PS50206">
    <property type="entry name" value="RHODANESE_3"/>
    <property type="match status" value="1"/>
</dbReference>
<dbReference type="PROSITE" id="PS51165">
    <property type="entry name" value="THUMP"/>
    <property type="match status" value="1"/>
</dbReference>
<evidence type="ECO:0000255" key="1">
    <source>
        <dbReference type="HAMAP-Rule" id="MF_00021"/>
    </source>
</evidence>
<protein>
    <recommendedName>
        <fullName evidence="1">tRNA sulfurtransferase</fullName>
        <ecNumber evidence="1">2.8.1.4</ecNumber>
    </recommendedName>
    <alternativeName>
        <fullName evidence="1">Sulfur carrier protein ThiS sulfurtransferase</fullName>
    </alternativeName>
    <alternativeName>
        <fullName evidence="1">Thiamine biosynthesis protein ThiI</fullName>
    </alternativeName>
    <alternativeName>
        <fullName evidence="1">tRNA 4-thiouridine synthase</fullName>
    </alternativeName>
</protein>
<name>THII_SALPK</name>
<accession>B5BDA7</accession>
<feature type="chain" id="PRO_1000090033" description="tRNA sulfurtransferase">
    <location>
        <begin position="1"/>
        <end position="482"/>
    </location>
</feature>
<feature type="domain" description="THUMP" evidence="1">
    <location>
        <begin position="61"/>
        <end position="165"/>
    </location>
</feature>
<feature type="domain" description="Rhodanese" evidence="1">
    <location>
        <begin position="404"/>
        <end position="482"/>
    </location>
</feature>
<feature type="active site" description="Cysteine persulfide intermediate" evidence="1">
    <location>
        <position position="456"/>
    </location>
</feature>
<feature type="binding site" evidence="1">
    <location>
        <begin position="183"/>
        <end position="184"/>
    </location>
    <ligand>
        <name>ATP</name>
        <dbReference type="ChEBI" id="CHEBI:30616"/>
    </ligand>
</feature>
<feature type="binding site" evidence="1">
    <location>
        <position position="265"/>
    </location>
    <ligand>
        <name>ATP</name>
        <dbReference type="ChEBI" id="CHEBI:30616"/>
    </ligand>
</feature>
<feature type="binding site" evidence="1">
    <location>
        <position position="287"/>
    </location>
    <ligand>
        <name>ATP</name>
        <dbReference type="ChEBI" id="CHEBI:30616"/>
    </ligand>
</feature>
<feature type="binding site" evidence="1">
    <location>
        <position position="296"/>
    </location>
    <ligand>
        <name>ATP</name>
        <dbReference type="ChEBI" id="CHEBI:30616"/>
    </ligand>
</feature>
<feature type="disulfide bond" description="Redox-active" evidence="1">
    <location>
        <begin position="344"/>
        <end position="456"/>
    </location>
</feature>
<gene>
    <name evidence="1" type="primary">thiI</name>
    <name type="ordered locus">SSPA2140</name>
</gene>
<proteinExistence type="inferred from homology"/>
<reference key="1">
    <citation type="journal article" date="2009" name="BMC Genomics">
        <title>Pseudogene accumulation in the evolutionary histories of Salmonella enterica serovars Paratyphi A and Typhi.</title>
        <authorList>
            <person name="Holt K.E."/>
            <person name="Thomson N.R."/>
            <person name="Wain J."/>
            <person name="Langridge G.C."/>
            <person name="Hasan R."/>
            <person name="Bhutta Z.A."/>
            <person name="Quail M.A."/>
            <person name="Norbertczak H."/>
            <person name="Walker D."/>
            <person name="Simmonds M."/>
            <person name="White B."/>
            <person name="Bason N."/>
            <person name="Mungall K."/>
            <person name="Dougan G."/>
            <person name="Parkhill J."/>
        </authorList>
    </citation>
    <scope>NUCLEOTIDE SEQUENCE [LARGE SCALE GENOMIC DNA]</scope>
    <source>
        <strain>AKU_12601</strain>
    </source>
</reference>
<sequence>MKFIIKLFPEITIKSQSVRLRFIKILTGNIRNVLKHYDETLAVVRHWDNIEVRAKDENQRLAIRDALTRIPGIHHILEVEDVPFTDMHDIFEKALAQYREQLEGKTFCVRVKRRGKHEFSSIEVERYVGGGLNQHIESARVKLTNPDVTVHLEVEDDRLLLIKGRYEGIGGFPIGTQEDVLSLISGGFDSGVSSYMLMRRGCRVHYCFFNLGGAAHEIGVRQVAHYLWNRFGSSHRVRFVAINFEPVVGEILEKVDDGQMGVVLKRMMVRAASKVAERYGVQALVTGEALGQVSSQTLTNLRLIDNVSDTLILRPLISYDKEHIINLARQIGTEDFARTMPEYCGVISKSPTVKAIKAKIEAEEENFDFSILDKVVEEANNVDIREIAQQTQQEVVEVETVSGFGANDVILDIRSVDEQDDKPLKVEGVDVVSLPFYKLSTKFGDLDQSKTWLLWCERGVMSRLQALYLREQGFANVKVYRP</sequence>